<gene>
    <name evidence="3 4" type="primary">esxN</name>
    <name type="ordered locus">Rv1793</name>
    <name type="ORF">MTV049.15</name>
</gene>
<proteinExistence type="evidence at protein level"/>
<evidence type="ECO:0000269" key="1">
    <source>
    </source>
</evidence>
<evidence type="ECO:0000269" key="2">
    <source>
    </source>
</evidence>
<evidence type="ECO:0000303" key="3">
    <source>
    </source>
</evidence>
<evidence type="ECO:0000303" key="4">
    <source>
    </source>
</evidence>
<evidence type="ECO:0000305" key="5"/>
<evidence type="ECO:0000305" key="6">
    <source>
    </source>
</evidence>
<protein>
    <recommendedName>
        <fullName evidence="5">ESAT-6-like protein EsxN</fullName>
    </recommendedName>
</protein>
<comment type="subcellular location">
    <subcellularLocation>
        <location evidence="1 2">Secreted</location>
    </subcellularLocation>
    <text evidence="1 2">Secreted via the ESX-5 / type VII secretion system (T7SS).</text>
</comment>
<comment type="similarity">
    <text evidence="6">Belongs to the WXG100 family. ESAT-6 subfamily.</text>
</comment>
<organism>
    <name type="scientific">Mycobacterium tuberculosis (strain ATCC 25618 / H37Rv)</name>
    <dbReference type="NCBI Taxonomy" id="83332"/>
    <lineage>
        <taxon>Bacteria</taxon>
        <taxon>Bacillati</taxon>
        <taxon>Actinomycetota</taxon>
        <taxon>Actinomycetes</taxon>
        <taxon>Mycobacteriales</taxon>
        <taxon>Mycobacteriaceae</taxon>
        <taxon>Mycobacterium</taxon>
        <taxon>Mycobacterium tuberculosis complex</taxon>
    </lineage>
</organism>
<accession>P9WNJ3</accession>
<accession>L0TAM3</accession>
<accession>O53942</accession>
<accession>P0A570</accession>
<feature type="chain" id="PRO_0000167808" description="ESAT-6-like protein EsxN">
    <location>
        <begin position="1"/>
        <end position="94"/>
    </location>
</feature>
<keyword id="KW-1185">Reference proteome</keyword>
<keyword id="KW-0964">Secreted</keyword>
<name>ESXN_MYCTU</name>
<reference key="1">
    <citation type="journal article" date="1998" name="Nature">
        <title>Deciphering the biology of Mycobacterium tuberculosis from the complete genome sequence.</title>
        <authorList>
            <person name="Cole S.T."/>
            <person name="Brosch R."/>
            <person name="Parkhill J."/>
            <person name="Garnier T."/>
            <person name="Churcher C.M."/>
            <person name="Harris D.E."/>
            <person name="Gordon S.V."/>
            <person name="Eiglmeier K."/>
            <person name="Gas S."/>
            <person name="Barry C.E. III"/>
            <person name="Tekaia F."/>
            <person name="Badcock K."/>
            <person name="Basham D."/>
            <person name="Brown D."/>
            <person name="Chillingworth T."/>
            <person name="Connor R."/>
            <person name="Davies R.M."/>
            <person name="Devlin K."/>
            <person name="Feltwell T."/>
            <person name="Gentles S."/>
            <person name="Hamlin N."/>
            <person name="Holroyd S."/>
            <person name="Hornsby T."/>
            <person name="Jagels K."/>
            <person name="Krogh A."/>
            <person name="McLean J."/>
            <person name="Moule S."/>
            <person name="Murphy L.D."/>
            <person name="Oliver S."/>
            <person name="Osborne J."/>
            <person name="Quail M.A."/>
            <person name="Rajandream M.A."/>
            <person name="Rogers J."/>
            <person name="Rutter S."/>
            <person name="Seeger K."/>
            <person name="Skelton S."/>
            <person name="Squares S."/>
            <person name="Squares R."/>
            <person name="Sulston J.E."/>
            <person name="Taylor K."/>
            <person name="Whitehead S."/>
            <person name="Barrell B.G."/>
        </authorList>
    </citation>
    <scope>NUCLEOTIDE SEQUENCE [LARGE SCALE GENOMIC DNA]</scope>
    <source>
        <strain>ATCC 25618 / H37Rv</strain>
    </source>
</reference>
<reference key="2">
    <citation type="journal article" date="2009" name="PLoS Pathog.">
        <title>Systematic genetic nomenclature for type VII secretion systems.</title>
        <authorList>
            <person name="Bitter W."/>
            <person name="Houben E.N."/>
            <person name="Bottai D."/>
            <person name="Brodin P."/>
            <person name="Brown E.J."/>
            <person name="Cox J.S."/>
            <person name="Derbyshire K."/>
            <person name="Fortune S.M."/>
            <person name="Gao L.Y."/>
            <person name="Liu J."/>
            <person name="Gey van Pittius N.C."/>
            <person name="Pym A.S."/>
            <person name="Rubin E.J."/>
            <person name="Sherman D.R."/>
            <person name="Cole S.T."/>
            <person name="Brosch R."/>
        </authorList>
    </citation>
    <scope>NOMENCLATURE</scope>
</reference>
<reference key="3">
    <citation type="journal article" date="2011" name="Mol. Cell. Proteomics">
        <title>Proteogenomic analysis of Mycobacterium tuberculosis by high resolution mass spectrometry.</title>
        <authorList>
            <person name="Kelkar D.S."/>
            <person name="Kumar D."/>
            <person name="Kumar P."/>
            <person name="Balakrishnan L."/>
            <person name="Muthusamy B."/>
            <person name="Yadav A.K."/>
            <person name="Shrivastava P."/>
            <person name="Marimuthu A."/>
            <person name="Anand S."/>
            <person name="Sundaram H."/>
            <person name="Kingsbury R."/>
            <person name="Harsha H.C."/>
            <person name="Nair B."/>
            <person name="Prasad T.S."/>
            <person name="Chauhan D.S."/>
            <person name="Katoch K."/>
            <person name="Katoch V.M."/>
            <person name="Kumar P."/>
            <person name="Chaerkady R."/>
            <person name="Ramachandran S."/>
            <person name="Dash D."/>
            <person name="Pandey A."/>
        </authorList>
    </citation>
    <scope>IDENTIFICATION BY MASS SPECTROMETRY [LARGE SCALE ANALYSIS]</scope>
    <source>
        <strain>ATCC 25618 / H37Rv</strain>
    </source>
</reference>
<reference key="4">
    <citation type="journal article" date="2012" name="Mol. Microbiol.">
        <title>Composition of the type VII secretion system membrane complex.</title>
        <authorList>
            <person name="Houben E.N."/>
            <person name="Bestebroer J."/>
            <person name="Ummels R."/>
            <person name="Wilson L."/>
            <person name="Piersma S.R."/>
            <person name="Jimenez C.R."/>
            <person name="Ottenhoff T.H."/>
            <person name="Luirink J."/>
            <person name="Bitter W."/>
        </authorList>
    </citation>
    <scope>SUBCELLULAR LOCATION</scope>
</reference>
<reference key="5">
    <citation type="journal article" date="2012" name="Mol. Microbiol.">
        <title>Disruption of the ESX-5 system of Mycobacterium tuberculosis causes loss of PPE protein secretion, reduction of cell wall integrity and strong attenuation.</title>
        <authorList>
            <person name="Bottai D."/>
            <person name="Di Luca M."/>
            <person name="Majlessi L."/>
            <person name="Frigui W."/>
            <person name="Simeone R."/>
            <person name="Sayes F."/>
            <person name="Bitter W."/>
            <person name="Brennan M.J."/>
            <person name="Leclerc C."/>
            <person name="Batoni G."/>
            <person name="Campa M."/>
            <person name="Brosch R."/>
            <person name="Esin S."/>
        </authorList>
    </citation>
    <scope>SUBCELLULAR LOCATION</scope>
</reference>
<sequence length="94" mass="9942">MTINYQFGDVDAHGAMIRAQAASLEAEHQAIVRDVLAAGDFWGGAGSVACQEFITQLGRNFQVIYEQANAHGQKVQAAGNNMAQTDSAVGSSWA</sequence>
<dbReference type="EMBL" id="AL123456">
    <property type="protein sequence ID" value="CCP44559.1"/>
    <property type="molecule type" value="Genomic_DNA"/>
</dbReference>
<dbReference type="PIR" id="B70930">
    <property type="entry name" value="B70930"/>
</dbReference>
<dbReference type="RefSeq" id="WP_003408840.1">
    <property type="nucleotide sequence ID" value="NZ_NVQJ01000037.1"/>
</dbReference>
<dbReference type="RefSeq" id="YP_177838.1">
    <property type="nucleotide sequence ID" value="NC_000962.3"/>
</dbReference>
<dbReference type="SMR" id="P9WNJ3"/>
<dbReference type="STRING" id="83332.Rv1793"/>
<dbReference type="PaxDb" id="83332-Rv1793"/>
<dbReference type="DNASU" id="885448"/>
<dbReference type="GeneID" id="45426331"/>
<dbReference type="GeneID" id="885448"/>
<dbReference type="KEGG" id="mtu:Rv1793"/>
<dbReference type="KEGG" id="mtv:RVBD_1793"/>
<dbReference type="TubercuList" id="Rv1793"/>
<dbReference type="eggNOG" id="ENOG5032I3T">
    <property type="taxonomic scope" value="Bacteria"/>
</dbReference>
<dbReference type="InParanoid" id="P9WNJ3"/>
<dbReference type="OrthoDB" id="4625013at2"/>
<dbReference type="PhylomeDB" id="P9WNJ3"/>
<dbReference type="Proteomes" id="UP000001584">
    <property type="component" value="Chromosome"/>
</dbReference>
<dbReference type="GO" id="GO:0005576">
    <property type="term" value="C:extracellular region"/>
    <property type="evidence" value="ECO:0007005"/>
    <property type="project" value="MTBBASE"/>
</dbReference>
<dbReference type="GO" id="GO:0005886">
    <property type="term" value="C:plasma membrane"/>
    <property type="evidence" value="ECO:0007005"/>
    <property type="project" value="MTBBASE"/>
</dbReference>
<dbReference type="FunFam" id="1.10.287.1060:FF:000004">
    <property type="entry name" value="ESAT-6-like protein EsxI"/>
    <property type="match status" value="1"/>
</dbReference>
<dbReference type="Gene3D" id="1.10.287.1060">
    <property type="entry name" value="ESAT-6-like"/>
    <property type="match status" value="1"/>
</dbReference>
<dbReference type="InterPro" id="IPR009416">
    <property type="entry name" value="ESAT-6-like_Myco"/>
</dbReference>
<dbReference type="InterPro" id="IPR036689">
    <property type="entry name" value="ESAT-6-like_sf"/>
</dbReference>
<dbReference type="InterPro" id="IPR010310">
    <property type="entry name" value="T7SS_ESAT-6-like"/>
</dbReference>
<dbReference type="Pfam" id="PF06013">
    <property type="entry name" value="WXG100"/>
    <property type="match status" value="1"/>
</dbReference>
<dbReference type="PIRSF" id="PIRSF037656">
    <property type="entry name" value="DUF1066"/>
    <property type="match status" value="1"/>
</dbReference>
<dbReference type="SUPFAM" id="SSF140453">
    <property type="entry name" value="EsxAB dimer-like"/>
    <property type="match status" value="1"/>
</dbReference>